<comment type="function">
    <text evidence="1">Involved in the synthesis of autoinducer 2 (AI-2) which is secreted by bacteria and is used to communicate both the cell density and the metabolic potential of the environment. The regulation of gene expression in response to changes in cell density is called quorum sensing. Catalyzes the transformation of S-ribosylhomocysteine (RHC) to homocysteine (HC) and 4,5-dihydroxy-2,3-pentadione (DPD).</text>
</comment>
<comment type="catalytic activity">
    <reaction evidence="1">
        <text>S-(5-deoxy-D-ribos-5-yl)-L-homocysteine = (S)-4,5-dihydroxypentane-2,3-dione + L-homocysteine</text>
        <dbReference type="Rhea" id="RHEA:17753"/>
        <dbReference type="ChEBI" id="CHEBI:29484"/>
        <dbReference type="ChEBI" id="CHEBI:58195"/>
        <dbReference type="ChEBI" id="CHEBI:58199"/>
        <dbReference type="EC" id="4.4.1.21"/>
    </reaction>
</comment>
<comment type="cofactor">
    <cofactor evidence="1">
        <name>Fe cation</name>
        <dbReference type="ChEBI" id="CHEBI:24875"/>
    </cofactor>
    <text evidence="1">Binds 1 Fe cation per subunit.</text>
</comment>
<comment type="subunit">
    <text evidence="1">Homodimer.</text>
</comment>
<comment type="similarity">
    <text evidence="1">Belongs to the LuxS family.</text>
</comment>
<name>LUXS_STAA8</name>
<gene>
    <name evidence="1" type="primary">luxS</name>
    <name type="ordered locus">SAOUHSC_02375</name>
</gene>
<dbReference type="EC" id="4.4.1.21" evidence="1"/>
<dbReference type="EMBL" id="CP000253">
    <property type="protein sequence ID" value="ABD31406.1"/>
    <property type="molecule type" value="Genomic_DNA"/>
</dbReference>
<dbReference type="RefSeq" id="WP_000164421.1">
    <property type="nucleotide sequence ID" value="NZ_LS483365.1"/>
</dbReference>
<dbReference type="RefSeq" id="YP_500852.1">
    <property type="nucleotide sequence ID" value="NC_007795.1"/>
</dbReference>
<dbReference type="SMR" id="Q2FWC3"/>
<dbReference type="STRING" id="93061.SAOUHSC_02375"/>
<dbReference type="PaxDb" id="1280-SAXN108_2379"/>
<dbReference type="GeneID" id="3919418"/>
<dbReference type="KEGG" id="sao:SAOUHSC_02375"/>
<dbReference type="PATRIC" id="fig|93061.5.peg.2152"/>
<dbReference type="eggNOG" id="COG1854">
    <property type="taxonomic scope" value="Bacteria"/>
</dbReference>
<dbReference type="HOGENOM" id="CLU_107531_2_0_9"/>
<dbReference type="OrthoDB" id="9788129at2"/>
<dbReference type="PRO" id="PR:Q2FWC3"/>
<dbReference type="Proteomes" id="UP000008816">
    <property type="component" value="Chromosome"/>
</dbReference>
<dbReference type="GO" id="GO:0005829">
    <property type="term" value="C:cytosol"/>
    <property type="evidence" value="ECO:0000318"/>
    <property type="project" value="GO_Central"/>
</dbReference>
<dbReference type="GO" id="GO:0005506">
    <property type="term" value="F:iron ion binding"/>
    <property type="evidence" value="ECO:0007669"/>
    <property type="project" value="InterPro"/>
</dbReference>
<dbReference type="GO" id="GO:0043768">
    <property type="term" value="F:S-ribosylhomocysteine lyase activity"/>
    <property type="evidence" value="ECO:0000318"/>
    <property type="project" value="GO_Central"/>
</dbReference>
<dbReference type="GO" id="GO:0019284">
    <property type="term" value="P:L-methionine salvage from S-adenosylmethionine"/>
    <property type="evidence" value="ECO:0000318"/>
    <property type="project" value="GO_Central"/>
</dbReference>
<dbReference type="GO" id="GO:0009372">
    <property type="term" value="P:quorum sensing"/>
    <property type="evidence" value="ECO:0007669"/>
    <property type="project" value="UniProtKB-UniRule"/>
</dbReference>
<dbReference type="Gene3D" id="3.30.1360.80">
    <property type="entry name" value="S-ribosylhomocysteinase (LuxS)"/>
    <property type="match status" value="1"/>
</dbReference>
<dbReference type="HAMAP" id="MF_00091">
    <property type="entry name" value="LuxS"/>
    <property type="match status" value="1"/>
</dbReference>
<dbReference type="InterPro" id="IPR037005">
    <property type="entry name" value="LuxS_sf"/>
</dbReference>
<dbReference type="InterPro" id="IPR011249">
    <property type="entry name" value="Metalloenz_LuxS/M16"/>
</dbReference>
<dbReference type="InterPro" id="IPR003815">
    <property type="entry name" value="S-ribosylhomocysteinase"/>
</dbReference>
<dbReference type="NCBIfam" id="NF002604">
    <property type="entry name" value="PRK02260.1-4"/>
    <property type="match status" value="1"/>
</dbReference>
<dbReference type="PANTHER" id="PTHR35799">
    <property type="entry name" value="S-RIBOSYLHOMOCYSTEINE LYASE"/>
    <property type="match status" value="1"/>
</dbReference>
<dbReference type="PANTHER" id="PTHR35799:SF1">
    <property type="entry name" value="S-RIBOSYLHOMOCYSTEINE LYASE"/>
    <property type="match status" value="1"/>
</dbReference>
<dbReference type="Pfam" id="PF02664">
    <property type="entry name" value="LuxS"/>
    <property type="match status" value="1"/>
</dbReference>
<dbReference type="PIRSF" id="PIRSF006160">
    <property type="entry name" value="AI2"/>
    <property type="match status" value="1"/>
</dbReference>
<dbReference type="PRINTS" id="PR01487">
    <property type="entry name" value="LUXSPROTEIN"/>
</dbReference>
<dbReference type="SUPFAM" id="SSF63411">
    <property type="entry name" value="LuxS/MPP-like metallohydrolase"/>
    <property type="match status" value="1"/>
</dbReference>
<sequence length="156" mass="17514">MTKMNVESFNLDHTKVVAPFIRLAGTMEGLNGDVIHKYDIRFKQPNKEHMDMPGLHSLEHLMAENIRNHSDKVVDLSPMGCQTGFYVSFINHDNYDDVLNIVEATLNDVLNATEVPACNEVQCGWAASHSLEGAKTIAQAFLDKRNEWHDVFGTGK</sequence>
<protein>
    <recommendedName>
        <fullName evidence="1">S-ribosylhomocysteine lyase</fullName>
        <ecNumber evidence="1">4.4.1.21</ecNumber>
    </recommendedName>
    <alternativeName>
        <fullName evidence="1">AI-2 synthesis protein</fullName>
    </alternativeName>
    <alternativeName>
        <fullName evidence="1">Autoinducer-2 production protein LuxS</fullName>
    </alternativeName>
</protein>
<feature type="chain" id="PRO_0000298036" description="S-ribosylhomocysteine lyase">
    <location>
        <begin position="1"/>
        <end position="156"/>
    </location>
</feature>
<feature type="binding site" evidence="1">
    <location>
        <position position="56"/>
    </location>
    <ligand>
        <name>Fe cation</name>
        <dbReference type="ChEBI" id="CHEBI:24875"/>
    </ligand>
</feature>
<feature type="binding site" evidence="1">
    <location>
        <position position="60"/>
    </location>
    <ligand>
        <name>Fe cation</name>
        <dbReference type="ChEBI" id="CHEBI:24875"/>
    </ligand>
</feature>
<feature type="binding site" evidence="1">
    <location>
        <position position="123"/>
    </location>
    <ligand>
        <name>Fe cation</name>
        <dbReference type="ChEBI" id="CHEBI:24875"/>
    </ligand>
</feature>
<keyword id="KW-0071">Autoinducer synthesis</keyword>
<keyword id="KW-0408">Iron</keyword>
<keyword id="KW-0456">Lyase</keyword>
<keyword id="KW-0479">Metal-binding</keyword>
<keyword id="KW-0673">Quorum sensing</keyword>
<keyword id="KW-1185">Reference proteome</keyword>
<proteinExistence type="inferred from homology"/>
<reference key="1">
    <citation type="book" date="2006" name="Gram positive pathogens, 2nd edition">
        <title>The Staphylococcus aureus NCTC 8325 genome.</title>
        <editorList>
            <person name="Fischetti V."/>
            <person name="Novick R."/>
            <person name="Ferretti J."/>
            <person name="Portnoy D."/>
            <person name="Rood J."/>
        </editorList>
        <authorList>
            <person name="Gillaspy A.F."/>
            <person name="Worrell V."/>
            <person name="Orvis J."/>
            <person name="Roe B.A."/>
            <person name="Dyer D.W."/>
            <person name="Iandolo J.J."/>
        </authorList>
    </citation>
    <scope>NUCLEOTIDE SEQUENCE [LARGE SCALE GENOMIC DNA]</scope>
    <source>
        <strain>NCTC 8325 / PS 47</strain>
    </source>
</reference>
<organism>
    <name type="scientific">Staphylococcus aureus (strain NCTC 8325 / PS 47)</name>
    <dbReference type="NCBI Taxonomy" id="93061"/>
    <lineage>
        <taxon>Bacteria</taxon>
        <taxon>Bacillati</taxon>
        <taxon>Bacillota</taxon>
        <taxon>Bacilli</taxon>
        <taxon>Bacillales</taxon>
        <taxon>Staphylococcaceae</taxon>
        <taxon>Staphylococcus</taxon>
    </lineage>
</organism>
<evidence type="ECO:0000255" key="1">
    <source>
        <dbReference type="HAMAP-Rule" id="MF_00091"/>
    </source>
</evidence>
<accession>Q2FWC3</accession>